<reference key="1">
    <citation type="journal article" date="2008" name="Genome Res.">
        <title>The genome of Pelotomaculum thermopropionicum reveals niche-associated evolution in anaerobic microbiota.</title>
        <authorList>
            <person name="Kosaka T."/>
            <person name="Kato S."/>
            <person name="Shimoyama T."/>
            <person name="Ishii S."/>
            <person name="Abe T."/>
            <person name="Watanabe K."/>
        </authorList>
    </citation>
    <scope>NUCLEOTIDE SEQUENCE [LARGE SCALE GENOMIC DNA]</scope>
    <source>
        <strain>DSM 13744 / JCM 10971 / SI</strain>
    </source>
</reference>
<evidence type="ECO:0000255" key="1">
    <source>
        <dbReference type="HAMAP-Rule" id="MF_01588"/>
    </source>
</evidence>
<accession>A5CZ68</accession>
<proteinExistence type="inferred from homology"/>
<keyword id="KW-0227">DNA damage</keyword>
<keyword id="KW-0234">DNA repair</keyword>
<keyword id="KW-0235">DNA replication</keyword>
<keyword id="KW-0436">Ligase</keyword>
<keyword id="KW-0460">Magnesium</keyword>
<keyword id="KW-0464">Manganese</keyword>
<keyword id="KW-0479">Metal-binding</keyword>
<keyword id="KW-0520">NAD</keyword>
<keyword id="KW-1185">Reference proteome</keyword>
<keyword id="KW-0862">Zinc</keyword>
<organism>
    <name type="scientific">Pelotomaculum thermopropionicum (strain DSM 13744 / JCM 10971 / SI)</name>
    <dbReference type="NCBI Taxonomy" id="370438"/>
    <lineage>
        <taxon>Bacteria</taxon>
        <taxon>Bacillati</taxon>
        <taxon>Bacillota</taxon>
        <taxon>Clostridia</taxon>
        <taxon>Eubacteriales</taxon>
        <taxon>Desulfotomaculaceae</taxon>
        <taxon>Pelotomaculum</taxon>
    </lineage>
</organism>
<dbReference type="EC" id="6.5.1.2" evidence="1"/>
<dbReference type="EMBL" id="AP009389">
    <property type="protein sequence ID" value="BAF60708.1"/>
    <property type="molecule type" value="Genomic_DNA"/>
</dbReference>
<dbReference type="SMR" id="A5CZ68"/>
<dbReference type="STRING" id="370438.PTH_2527"/>
<dbReference type="KEGG" id="pth:PTH_2527"/>
<dbReference type="eggNOG" id="COG0272">
    <property type="taxonomic scope" value="Bacteria"/>
</dbReference>
<dbReference type="HOGENOM" id="CLU_007764_2_1_9"/>
<dbReference type="Proteomes" id="UP000006556">
    <property type="component" value="Chromosome"/>
</dbReference>
<dbReference type="GO" id="GO:0005829">
    <property type="term" value="C:cytosol"/>
    <property type="evidence" value="ECO:0007669"/>
    <property type="project" value="TreeGrafter"/>
</dbReference>
<dbReference type="GO" id="GO:0003677">
    <property type="term" value="F:DNA binding"/>
    <property type="evidence" value="ECO:0007669"/>
    <property type="project" value="InterPro"/>
</dbReference>
<dbReference type="GO" id="GO:0003911">
    <property type="term" value="F:DNA ligase (NAD+) activity"/>
    <property type="evidence" value="ECO:0007669"/>
    <property type="project" value="UniProtKB-UniRule"/>
</dbReference>
<dbReference type="GO" id="GO:0046872">
    <property type="term" value="F:metal ion binding"/>
    <property type="evidence" value="ECO:0007669"/>
    <property type="project" value="UniProtKB-KW"/>
</dbReference>
<dbReference type="GO" id="GO:0006281">
    <property type="term" value="P:DNA repair"/>
    <property type="evidence" value="ECO:0007669"/>
    <property type="project" value="UniProtKB-KW"/>
</dbReference>
<dbReference type="GO" id="GO:0006260">
    <property type="term" value="P:DNA replication"/>
    <property type="evidence" value="ECO:0007669"/>
    <property type="project" value="UniProtKB-KW"/>
</dbReference>
<dbReference type="CDD" id="cd17748">
    <property type="entry name" value="BRCT_DNA_ligase_like"/>
    <property type="match status" value="1"/>
</dbReference>
<dbReference type="CDD" id="cd00114">
    <property type="entry name" value="LIGANc"/>
    <property type="match status" value="1"/>
</dbReference>
<dbReference type="FunFam" id="1.10.150.20:FF:000006">
    <property type="entry name" value="DNA ligase"/>
    <property type="match status" value="1"/>
</dbReference>
<dbReference type="FunFam" id="1.10.150.20:FF:000007">
    <property type="entry name" value="DNA ligase"/>
    <property type="match status" value="1"/>
</dbReference>
<dbReference type="FunFam" id="1.10.287.610:FF:000002">
    <property type="entry name" value="DNA ligase"/>
    <property type="match status" value="1"/>
</dbReference>
<dbReference type="FunFam" id="2.40.50.140:FF:000012">
    <property type="entry name" value="DNA ligase"/>
    <property type="match status" value="1"/>
</dbReference>
<dbReference type="FunFam" id="3.30.470.30:FF:000001">
    <property type="entry name" value="DNA ligase"/>
    <property type="match status" value="1"/>
</dbReference>
<dbReference type="Gene3D" id="6.20.10.30">
    <property type="match status" value="1"/>
</dbReference>
<dbReference type="Gene3D" id="1.10.150.20">
    <property type="entry name" value="5' to 3' exonuclease, C-terminal subdomain"/>
    <property type="match status" value="2"/>
</dbReference>
<dbReference type="Gene3D" id="3.40.50.10190">
    <property type="entry name" value="BRCT domain"/>
    <property type="match status" value="1"/>
</dbReference>
<dbReference type="Gene3D" id="3.30.470.30">
    <property type="entry name" value="DNA ligase/mRNA capping enzyme"/>
    <property type="match status" value="1"/>
</dbReference>
<dbReference type="Gene3D" id="1.10.287.610">
    <property type="entry name" value="Helix hairpin bin"/>
    <property type="match status" value="1"/>
</dbReference>
<dbReference type="Gene3D" id="2.40.50.140">
    <property type="entry name" value="Nucleic acid-binding proteins"/>
    <property type="match status" value="1"/>
</dbReference>
<dbReference type="HAMAP" id="MF_01588">
    <property type="entry name" value="DNA_ligase_A"/>
    <property type="match status" value="1"/>
</dbReference>
<dbReference type="InterPro" id="IPR001357">
    <property type="entry name" value="BRCT_dom"/>
</dbReference>
<dbReference type="InterPro" id="IPR036420">
    <property type="entry name" value="BRCT_dom_sf"/>
</dbReference>
<dbReference type="InterPro" id="IPR041663">
    <property type="entry name" value="DisA/LigA_HHH"/>
</dbReference>
<dbReference type="InterPro" id="IPR001679">
    <property type="entry name" value="DNA_ligase"/>
</dbReference>
<dbReference type="InterPro" id="IPR018239">
    <property type="entry name" value="DNA_ligase_AS"/>
</dbReference>
<dbReference type="InterPro" id="IPR033136">
    <property type="entry name" value="DNA_ligase_CS"/>
</dbReference>
<dbReference type="InterPro" id="IPR013839">
    <property type="entry name" value="DNAligase_adenylation"/>
</dbReference>
<dbReference type="InterPro" id="IPR013840">
    <property type="entry name" value="DNAligase_N"/>
</dbReference>
<dbReference type="InterPro" id="IPR003583">
    <property type="entry name" value="Hlx-hairpin-Hlx_DNA-bd_motif"/>
</dbReference>
<dbReference type="InterPro" id="IPR012340">
    <property type="entry name" value="NA-bd_OB-fold"/>
</dbReference>
<dbReference type="InterPro" id="IPR004150">
    <property type="entry name" value="NAD_DNA_ligase_OB"/>
</dbReference>
<dbReference type="InterPro" id="IPR010994">
    <property type="entry name" value="RuvA_2-like"/>
</dbReference>
<dbReference type="InterPro" id="IPR004149">
    <property type="entry name" value="Znf_DNAligase_C4"/>
</dbReference>
<dbReference type="NCBIfam" id="TIGR00575">
    <property type="entry name" value="dnlj"/>
    <property type="match status" value="1"/>
</dbReference>
<dbReference type="NCBIfam" id="NF005932">
    <property type="entry name" value="PRK07956.1"/>
    <property type="match status" value="1"/>
</dbReference>
<dbReference type="PANTHER" id="PTHR23389">
    <property type="entry name" value="CHROMOSOME TRANSMISSION FIDELITY FACTOR 18"/>
    <property type="match status" value="1"/>
</dbReference>
<dbReference type="PANTHER" id="PTHR23389:SF9">
    <property type="entry name" value="DNA LIGASE"/>
    <property type="match status" value="1"/>
</dbReference>
<dbReference type="Pfam" id="PF00533">
    <property type="entry name" value="BRCT"/>
    <property type="match status" value="1"/>
</dbReference>
<dbReference type="Pfam" id="PF01653">
    <property type="entry name" value="DNA_ligase_aden"/>
    <property type="match status" value="1"/>
</dbReference>
<dbReference type="Pfam" id="PF03120">
    <property type="entry name" value="DNA_ligase_OB"/>
    <property type="match status" value="1"/>
</dbReference>
<dbReference type="Pfam" id="PF03119">
    <property type="entry name" value="DNA_ligase_ZBD"/>
    <property type="match status" value="1"/>
</dbReference>
<dbReference type="Pfam" id="PF12826">
    <property type="entry name" value="HHH_2"/>
    <property type="match status" value="1"/>
</dbReference>
<dbReference type="Pfam" id="PF14520">
    <property type="entry name" value="HHH_5"/>
    <property type="match status" value="1"/>
</dbReference>
<dbReference type="Pfam" id="PF22745">
    <property type="entry name" value="Nlig-Ia"/>
    <property type="match status" value="1"/>
</dbReference>
<dbReference type="PIRSF" id="PIRSF001604">
    <property type="entry name" value="LigA"/>
    <property type="match status" value="1"/>
</dbReference>
<dbReference type="SMART" id="SM00292">
    <property type="entry name" value="BRCT"/>
    <property type="match status" value="1"/>
</dbReference>
<dbReference type="SMART" id="SM00278">
    <property type="entry name" value="HhH1"/>
    <property type="match status" value="4"/>
</dbReference>
<dbReference type="SMART" id="SM00532">
    <property type="entry name" value="LIGANc"/>
    <property type="match status" value="1"/>
</dbReference>
<dbReference type="SUPFAM" id="SSF52113">
    <property type="entry name" value="BRCT domain"/>
    <property type="match status" value="1"/>
</dbReference>
<dbReference type="SUPFAM" id="SSF56091">
    <property type="entry name" value="DNA ligase/mRNA capping enzyme, catalytic domain"/>
    <property type="match status" value="1"/>
</dbReference>
<dbReference type="SUPFAM" id="SSF50249">
    <property type="entry name" value="Nucleic acid-binding proteins"/>
    <property type="match status" value="1"/>
</dbReference>
<dbReference type="SUPFAM" id="SSF47781">
    <property type="entry name" value="RuvA domain 2-like"/>
    <property type="match status" value="1"/>
</dbReference>
<dbReference type="PROSITE" id="PS50172">
    <property type="entry name" value="BRCT"/>
    <property type="match status" value="1"/>
</dbReference>
<dbReference type="PROSITE" id="PS01055">
    <property type="entry name" value="DNA_LIGASE_N1"/>
    <property type="match status" value="1"/>
</dbReference>
<dbReference type="PROSITE" id="PS01056">
    <property type="entry name" value="DNA_LIGASE_N2"/>
    <property type="match status" value="1"/>
</dbReference>
<sequence length="679" mass="75382">MTQDLERARERAEELRREIEHHNYLYYVLDRPAITDAQYDRLMRELERLEKQFPALVTPYSPTQRVGGRPREGFAAVRHLSPMLSLANAFDERELRDFDRRVRQALPGEQVRYVVELKIDGLAVSLYYENGILVRGATRGDGDTGEDITENLKTVRSVPLRLRRPVPALEVRGEAFMPKEAFSRLNEGREEAGETLFANPRNAAAGSLRQLDPKITASRQLDLFVYGTGYGEWGRAVFPDGERTAPQEHAEVLELLKELGFKVNPEYRLFDRLDELVEYCLGWQARRFELPYAVDGLVIKVNSLAQQERLGATMKSPRWAVAYKFPPEQAVTKVKDIFVRVGRTGVLTPTAELEPVRLAGTTVSRATLHNEDIIREKDIRIGDKVLVQKAGDIIPEVVAVLKEERTGAEKAWAMPGRCPSCGAGVVRAEGEAAVRCTNMACPARLQEGLIHFASRDAMDIAGLGPAVIAQLVSAGLVGDPADLYALRYEDLVPLERLGPKSARNLLEAIEASKGRSLARLIFALGIRHVGERAAKILANHYQSLSGLMSATQEELVNIPEIGPKIAASIVEFFSNEQNRKVIDKLVKAGVNTLTEKVIREGGGPLNGKVFVLTGVLKDFSRQQAQELIESLGGRISSSVSRNTDFVVAGENPGSKYEKALTLGVKILDENEFRELTGRK</sequence>
<gene>
    <name evidence="1" type="primary">ligA</name>
    <name type="ordered locus">PTH_2527</name>
</gene>
<feature type="chain" id="PRO_0000340363" description="DNA ligase">
    <location>
        <begin position="1"/>
        <end position="679"/>
    </location>
</feature>
<feature type="domain" description="BRCT" evidence="1">
    <location>
        <begin position="600"/>
        <end position="679"/>
    </location>
</feature>
<feature type="active site" description="N6-AMP-lysine intermediate" evidence="1">
    <location>
        <position position="118"/>
    </location>
</feature>
<feature type="binding site" evidence="1">
    <location>
        <begin position="36"/>
        <end position="40"/>
    </location>
    <ligand>
        <name>NAD(+)</name>
        <dbReference type="ChEBI" id="CHEBI:57540"/>
    </ligand>
</feature>
<feature type="binding site" evidence="1">
    <location>
        <begin position="85"/>
        <end position="86"/>
    </location>
    <ligand>
        <name>NAD(+)</name>
        <dbReference type="ChEBI" id="CHEBI:57540"/>
    </ligand>
</feature>
<feature type="binding site" evidence="1">
    <location>
        <position position="116"/>
    </location>
    <ligand>
        <name>NAD(+)</name>
        <dbReference type="ChEBI" id="CHEBI:57540"/>
    </ligand>
</feature>
<feature type="binding site" evidence="1">
    <location>
        <position position="139"/>
    </location>
    <ligand>
        <name>NAD(+)</name>
        <dbReference type="ChEBI" id="CHEBI:57540"/>
    </ligand>
</feature>
<feature type="binding site" evidence="1">
    <location>
        <position position="174"/>
    </location>
    <ligand>
        <name>NAD(+)</name>
        <dbReference type="ChEBI" id="CHEBI:57540"/>
    </ligand>
</feature>
<feature type="binding site" evidence="1">
    <location>
        <position position="300"/>
    </location>
    <ligand>
        <name>NAD(+)</name>
        <dbReference type="ChEBI" id="CHEBI:57540"/>
    </ligand>
</feature>
<feature type="binding site" evidence="1">
    <location>
        <position position="324"/>
    </location>
    <ligand>
        <name>NAD(+)</name>
        <dbReference type="ChEBI" id="CHEBI:57540"/>
    </ligand>
</feature>
<feature type="binding site" evidence="1">
    <location>
        <position position="418"/>
    </location>
    <ligand>
        <name>Zn(2+)</name>
        <dbReference type="ChEBI" id="CHEBI:29105"/>
    </ligand>
</feature>
<feature type="binding site" evidence="1">
    <location>
        <position position="421"/>
    </location>
    <ligand>
        <name>Zn(2+)</name>
        <dbReference type="ChEBI" id="CHEBI:29105"/>
    </ligand>
</feature>
<feature type="binding site" evidence="1">
    <location>
        <position position="436"/>
    </location>
    <ligand>
        <name>Zn(2+)</name>
        <dbReference type="ChEBI" id="CHEBI:29105"/>
    </ligand>
</feature>
<feature type="binding site" evidence="1">
    <location>
        <position position="441"/>
    </location>
    <ligand>
        <name>Zn(2+)</name>
        <dbReference type="ChEBI" id="CHEBI:29105"/>
    </ligand>
</feature>
<protein>
    <recommendedName>
        <fullName evidence="1">DNA ligase</fullName>
        <ecNumber evidence="1">6.5.1.2</ecNumber>
    </recommendedName>
    <alternativeName>
        <fullName evidence="1">Polydeoxyribonucleotide synthase [NAD(+)]</fullName>
    </alternativeName>
</protein>
<comment type="function">
    <text evidence="1">DNA ligase that catalyzes the formation of phosphodiester linkages between 5'-phosphoryl and 3'-hydroxyl groups in double-stranded DNA using NAD as a coenzyme and as the energy source for the reaction. It is essential for DNA replication and repair of damaged DNA.</text>
</comment>
<comment type="catalytic activity">
    <reaction evidence="1">
        <text>NAD(+) + (deoxyribonucleotide)n-3'-hydroxyl + 5'-phospho-(deoxyribonucleotide)m = (deoxyribonucleotide)n+m + AMP + beta-nicotinamide D-nucleotide.</text>
        <dbReference type="EC" id="6.5.1.2"/>
    </reaction>
</comment>
<comment type="cofactor">
    <cofactor evidence="1">
        <name>Mg(2+)</name>
        <dbReference type="ChEBI" id="CHEBI:18420"/>
    </cofactor>
    <cofactor evidence="1">
        <name>Mn(2+)</name>
        <dbReference type="ChEBI" id="CHEBI:29035"/>
    </cofactor>
</comment>
<comment type="similarity">
    <text evidence="1">Belongs to the NAD-dependent DNA ligase family. LigA subfamily.</text>
</comment>
<name>DNLJ_PELTS</name>